<sequence>MSADASTNSNASLDEKNLNITSEAEIKNEDVTAEPVLSTVLSPNGKIVYISDKVDEAMKLAEEAKEIEVTPEEDRKLRWKIDYCMFPLMCILYAVQFMDKISTSSAAVMGLRTDLKMHGDQYSWVTSAFYFGYLFMNLGPVQFIFQRTSHMSKMLAVFIVIWGMLLALHAAPTVKYPSFIVLRVLLGCAESVVTPCFTIITAQYWKTEEQFTRVSIWFGMNGLGSILINAIAYGVYIHQDSYAIKGWRTLFVITGVITIFIGILIFLWIPDDPSKARFLSKREKLMVVQRIRSNQQGFGNHEIKKYQIIEALKDVRTWLYFLFTVSSNIPNGGISSFMSILLNSDFGYSSKETLLMGLPTGAVELVGCPLFGILAVYAANKKIPFWKYKLSWAIFAAVLALIASCMLGFATNSKKARLAGAYLWYISPVSFICVLSNISANSSGYSKKWTVSSINLVAYAAANLAGPQTFIAKQAPKYHGAKVAMVVCYAVMIVLLSILLIVNLRENKRRDKIAAERGFPEETENLEFSDLTDFENPNFRYTL</sequence>
<name>DAL5_YEAST</name>
<reference key="1">
    <citation type="journal article" date="1988" name="J. Bacteriol.">
        <title>Structure and transcription of the allantoate permease gene (DAL5) from Saccharomyces cerevisiae.</title>
        <authorList>
            <person name="Rai R."/>
            <person name="Genbauffe F.S."/>
            <person name="Cooper T.G."/>
        </authorList>
    </citation>
    <scope>NUCLEOTIDE SEQUENCE [GENOMIC DNA]</scope>
</reference>
<reference key="2">
    <citation type="journal article" date="1996" name="EMBO J.">
        <title>Complete nucleotide sequence of Saccharomyces cerevisiae chromosome X.</title>
        <authorList>
            <person name="Galibert F."/>
            <person name="Alexandraki D."/>
            <person name="Baur A."/>
            <person name="Boles E."/>
            <person name="Chalwatzis N."/>
            <person name="Chuat J.-C."/>
            <person name="Coster F."/>
            <person name="Cziepluch C."/>
            <person name="de Haan M."/>
            <person name="Domdey H."/>
            <person name="Durand P."/>
            <person name="Entian K.-D."/>
            <person name="Gatius M."/>
            <person name="Goffeau A."/>
            <person name="Grivell L.A."/>
            <person name="Hennemann A."/>
            <person name="Herbert C.J."/>
            <person name="Heumann K."/>
            <person name="Hilger F."/>
            <person name="Hollenberg C.P."/>
            <person name="Huang M.-E."/>
            <person name="Jacq C."/>
            <person name="Jauniaux J.-C."/>
            <person name="Katsoulou C."/>
            <person name="Kirchrath L."/>
            <person name="Kleine K."/>
            <person name="Kordes E."/>
            <person name="Koetter P."/>
            <person name="Liebl S."/>
            <person name="Louis E.J."/>
            <person name="Manus V."/>
            <person name="Mewes H.-W."/>
            <person name="Miosga T."/>
            <person name="Obermaier B."/>
            <person name="Perea J."/>
            <person name="Pohl T.M."/>
            <person name="Portetelle D."/>
            <person name="Pujol A."/>
            <person name="Purnelle B."/>
            <person name="Ramezani Rad M."/>
            <person name="Rasmussen S.W."/>
            <person name="Rose M."/>
            <person name="Rossau R."/>
            <person name="Schaaff-Gerstenschlaeger I."/>
            <person name="Smits P.H.M."/>
            <person name="Scarcez T."/>
            <person name="Soriano N."/>
            <person name="To Van D."/>
            <person name="Tzermia M."/>
            <person name="Van Broekhoven A."/>
            <person name="Vandenbol M."/>
            <person name="Wedler H."/>
            <person name="von Wettstein D."/>
            <person name="Wambutt R."/>
            <person name="Zagulski M."/>
            <person name="Zollner A."/>
            <person name="Karpfinger-Hartl L."/>
        </authorList>
    </citation>
    <scope>NUCLEOTIDE SEQUENCE [LARGE SCALE GENOMIC DNA]</scope>
    <source>
        <strain>ATCC 204508 / S288c</strain>
    </source>
</reference>
<reference key="3">
    <citation type="journal article" date="2014" name="G3 (Bethesda)">
        <title>The reference genome sequence of Saccharomyces cerevisiae: Then and now.</title>
        <authorList>
            <person name="Engel S.R."/>
            <person name="Dietrich F.S."/>
            <person name="Fisk D.G."/>
            <person name="Binkley G."/>
            <person name="Balakrishnan R."/>
            <person name="Costanzo M.C."/>
            <person name="Dwight S.S."/>
            <person name="Hitz B.C."/>
            <person name="Karra K."/>
            <person name="Nash R.S."/>
            <person name="Weng S."/>
            <person name="Wong E.D."/>
            <person name="Lloyd P."/>
            <person name="Skrzypek M.S."/>
            <person name="Miyasato S.R."/>
            <person name="Simison M."/>
            <person name="Cherry J.M."/>
        </authorList>
    </citation>
    <scope>GENOME REANNOTATION</scope>
    <source>
        <strain>ATCC 204508 / S288c</strain>
    </source>
</reference>
<reference key="4">
    <citation type="journal article" date="2006" name="Proc. Natl. Acad. Sci. U.S.A.">
        <title>A global topology map of the Saccharomyces cerevisiae membrane proteome.</title>
        <authorList>
            <person name="Kim H."/>
            <person name="Melen K."/>
            <person name="Oesterberg M."/>
            <person name="von Heijne G."/>
        </authorList>
    </citation>
    <scope>TOPOLOGY [LARGE SCALE ANALYSIS]</scope>
    <source>
        <strain>ATCC 208353 / W303-1A</strain>
    </source>
</reference>
<gene>
    <name type="primary">DAL5</name>
    <name type="synonym">UREP1</name>
    <name type="ordered locus">YJR152W</name>
    <name type="ORF">J2230</name>
</gene>
<comment type="function">
    <text>Component of the allantoate transport system.</text>
</comment>
<comment type="subcellular location">
    <subcellularLocation>
        <location>Membrane</location>
        <topology>Multi-pass membrane protein</topology>
    </subcellularLocation>
</comment>
<comment type="similarity">
    <text evidence="2">Belongs to the major facilitator superfamily. Allantoate permease family.</text>
</comment>
<evidence type="ECO:0000255" key="1"/>
<evidence type="ECO:0000305" key="2"/>
<accession>P15365</accession>
<accession>D6VWX1</accession>
<keyword id="KW-0472">Membrane</keyword>
<keyword id="KW-1185">Reference proteome</keyword>
<keyword id="KW-0812">Transmembrane</keyword>
<keyword id="KW-1133">Transmembrane helix</keyword>
<keyword id="KW-0813">Transport</keyword>
<dbReference type="EMBL" id="M24098">
    <property type="protein sequence ID" value="AAA34555.1"/>
    <property type="molecule type" value="Genomic_DNA"/>
</dbReference>
<dbReference type="EMBL" id="Z49652">
    <property type="protein sequence ID" value="CAA89685.1"/>
    <property type="molecule type" value="Genomic_DNA"/>
</dbReference>
<dbReference type="EMBL" id="BK006943">
    <property type="protein sequence ID" value="DAA08937.1"/>
    <property type="molecule type" value="Genomic_DNA"/>
</dbReference>
<dbReference type="PIR" id="A28671">
    <property type="entry name" value="A28671"/>
</dbReference>
<dbReference type="RefSeq" id="NP_012686.3">
    <property type="nucleotide sequence ID" value="NM_001181810.3"/>
</dbReference>
<dbReference type="SMR" id="P15365"/>
<dbReference type="BioGRID" id="33907">
    <property type="interactions" value="69"/>
</dbReference>
<dbReference type="DIP" id="DIP-7873N"/>
<dbReference type="FunCoup" id="P15365">
    <property type="interactions" value="210"/>
</dbReference>
<dbReference type="IntAct" id="P15365">
    <property type="interactions" value="5"/>
</dbReference>
<dbReference type="MINT" id="P15365"/>
<dbReference type="STRING" id="4932.YJR152W"/>
<dbReference type="TCDB" id="2.A.1.14.4">
    <property type="family name" value="the major facilitator superfamily (mfs)"/>
</dbReference>
<dbReference type="iPTMnet" id="P15365"/>
<dbReference type="PaxDb" id="4932-YJR152W"/>
<dbReference type="PeptideAtlas" id="P15365"/>
<dbReference type="EnsemblFungi" id="YJR152W_mRNA">
    <property type="protein sequence ID" value="YJR152W"/>
    <property type="gene ID" value="YJR152W"/>
</dbReference>
<dbReference type="GeneID" id="853617"/>
<dbReference type="KEGG" id="sce:YJR152W"/>
<dbReference type="AGR" id="SGD:S000003913"/>
<dbReference type="SGD" id="S000003913">
    <property type="gene designation" value="DAL5"/>
</dbReference>
<dbReference type="VEuPathDB" id="FungiDB:YJR152W"/>
<dbReference type="eggNOG" id="KOG2533">
    <property type="taxonomic scope" value="Eukaryota"/>
</dbReference>
<dbReference type="HOGENOM" id="CLU_001265_0_5_1"/>
<dbReference type="InParanoid" id="P15365"/>
<dbReference type="OMA" id="CMFPLMC"/>
<dbReference type="OrthoDB" id="6730379at2759"/>
<dbReference type="BioCyc" id="YEAST:G3O-31765-MONOMER"/>
<dbReference type="BioGRID-ORCS" id="853617">
    <property type="hits" value="0 hits in 10 CRISPR screens"/>
</dbReference>
<dbReference type="PRO" id="PR:P15365"/>
<dbReference type="Proteomes" id="UP000002311">
    <property type="component" value="Chromosome X"/>
</dbReference>
<dbReference type="RNAct" id="P15365">
    <property type="molecule type" value="protein"/>
</dbReference>
<dbReference type="GO" id="GO:0071944">
    <property type="term" value="C:cell periphery"/>
    <property type="evidence" value="ECO:0007005"/>
    <property type="project" value="SGD"/>
</dbReference>
<dbReference type="GO" id="GO:0000324">
    <property type="term" value="C:fungal-type vacuole"/>
    <property type="evidence" value="ECO:0007005"/>
    <property type="project" value="SGD"/>
</dbReference>
<dbReference type="GO" id="GO:0005886">
    <property type="term" value="C:plasma membrane"/>
    <property type="evidence" value="ECO:0000315"/>
    <property type="project" value="SGD"/>
</dbReference>
<dbReference type="GO" id="GO:0015124">
    <property type="term" value="F:allantoate transmembrane transporter activity"/>
    <property type="evidence" value="ECO:0000315"/>
    <property type="project" value="SGD"/>
</dbReference>
<dbReference type="GO" id="GO:0071916">
    <property type="term" value="F:dipeptide transmembrane transporter activity"/>
    <property type="evidence" value="ECO:0000315"/>
    <property type="project" value="SGD"/>
</dbReference>
<dbReference type="GO" id="GO:0015719">
    <property type="term" value="P:allantoate transport"/>
    <property type="evidence" value="ECO:0000315"/>
    <property type="project" value="SGD"/>
</dbReference>
<dbReference type="GO" id="GO:0042938">
    <property type="term" value="P:dipeptide transport"/>
    <property type="evidence" value="ECO:0000315"/>
    <property type="project" value="SGD"/>
</dbReference>
<dbReference type="GO" id="GO:0042939">
    <property type="term" value="P:tripeptide transport"/>
    <property type="evidence" value="ECO:0000315"/>
    <property type="project" value="SGD"/>
</dbReference>
<dbReference type="CDD" id="cd17327">
    <property type="entry name" value="MFS_FEN2_like"/>
    <property type="match status" value="1"/>
</dbReference>
<dbReference type="FunFam" id="1.20.1250.20:FF:000064">
    <property type="entry name" value="MFS allantoate transporter"/>
    <property type="match status" value="1"/>
</dbReference>
<dbReference type="FunFam" id="1.20.1250.20:FF:000245">
    <property type="entry name" value="MFS allantoate transporter"/>
    <property type="match status" value="1"/>
</dbReference>
<dbReference type="Gene3D" id="1.20.1250.20">
    <property type="entry name" value="MFS general substrate transporter like domains"/>
    <property type="match status" value="2"/>
</dbReference>
<dbReference type="InterPro" id="IPR011701">
    <property type="entry name" value="MFS"/>
</dbReference>
<dbReference type="InterPro" id="IPR036259">
    <property type="entry name" value="MFS_trans_sf"/>
</dbReference>
<dbReference type="NCBIfam" id="TIGR00893">
    <property type="entry name" value="2A0114"/>
    <property type="match status" value="1"/>
</dbReference>
<dbReference type="PANTHER" id="PTHR43791:SF1">
    <property type="entry name" value="ALLANTOATE PERMEASE"/>
    <property type="match status" value="1"/>
</dbReference>
<dbReference type="PANTHER" id="PTHR43791">
    <property type="entry name" value="PERMEASE-RELATED"/>
    <property type="match status" value="1"/>
</dbReference>
<dbReference type="Pfam" id="PF07690">
    <property type="entry name" value="MFS_1"/>
    <property type="match status" value="1"/>
</dbReference>
<dbReference type="SUPFAM" id="SSF103473">
    <property type="entry name" value="MFS general substrate transporter"/>
    <property type="match status" value="1"/>
</dbReference>
<feature type="chain" id="PRO_0000121366" description="Allantoate permease">
    <location>
        <begin position="1"/>
        <end position="543"/>
    </location>
</feature>
<feature type="topological domain" description="Cytoplasmic" evidence="1">
    <location>
        <begin position="1"/>
        <end position="80"/>
    </location>
</feature>
<feature type="transmembrane region" description="Helical" evidence="1">
    <location>
        <begin position="81"/>
        <end position="97"/>
    </location>
</feature>
<feature type="topological domain" description="Extracellular" evidence="1">
    <location>
        <begin position="98"/>
        <end position="123"/>
    </location>
</feature>
<feature type="transmembrane region" description="Helical" evidence="1">
    <location>
        <begin position="124"/>
        <end position="145"/>
    </location>
</feature>
<feature type="topological domain" description="Cytoplasmic" evidence="1">
    <location>
        <begin position="146"/>
        <end position="154"/>
    </location>
</feature>
<feature type="transmembrane region" description="Helical" evidence="1">
    <location>
        <begin position="155"/>
        <end position="171"/>
    </location>
</feature>
<feature type="topological domain" description="Extracellular" evidence="1">
    <location>
        <begin position="172"/>
        <end position="178"/>
    </location>
</feature>
<feature type="transmembrane region" description="Helical" evidence="1">
    <location>
        <begin position="179"/>
        <end position="200"/>
    </location>
</feature>
<feature type="topological domain" description="Cytoplasmic" evidence="1">
    <location>
        <begin position="201"/>
        <end position="213"/>
    </location>
</feature>
<feature type="transmembrane region" description="Helical" evidence="1">
    <location>
        <begin position="214"/>
        <end position="237"/>
    </location>
</feature>
<feature type="topological domain" description="Extracellular" evidence="1">
    <location>
        <begin position="238"/>
        <end position="248"/>
    </location>
</feature>
<feature type="transmembrane region" description="Helical" evidence="1">
    <location>
        <begin position="249"/>
        <end position="269"/>
    </location>
</feature>
<feature type="topological domain" description="Cytoplasmic" evidence="1">
    <location>
        <begin position="270"/>
        <end position="317"/>
    </location>
</feature>
<feature type="transmembrane region" description="Helical" evidence="1">
    <location>
        <begin position="318"/>
        <end position="342"/>
    </location>
</feature>
<feature type="topological domain" description="Extracellular" evidence="1">
    <location>
        <begin position="343"/>
        <end position="352"/>
    </location>
</feature>
<feature type="transmembrane region" description="Helical" evidence="1">
    <location>
        <begin position="353"/>
        <end position="377"/>
    </location>
</feature>
<feature type="topological domain" description="Cytoplasmic" evidence="1">
    <location>
        <begin position="378"/>
        <end position="389"/>
    </location>
</feature>
<feature type="transmembrane region" description="Helical" evidence="1">
    <location>
        <begin position="390"/>
        <end position="411"/>
    </location>
</feature>
<feature type="topological domain" description="Extracellular" evidence="1">
    <location>
        <begin position="412"/>
        <end position="417"/>
    </location>
</feature>
<feature type="transmembrane region" description="Helical" evidence="1">
    <location>
        <begin position="418"/>
        <end position="435"/>
    </location>
</feature>
<feature type="topological domain" description="Cytoplasmic" evidence="1">
    <location>
        <begin position="436"/>
        <end position="453"/>
    </location>
</feature>
<feature type="transmembrane region" description="Helical" evidence="1">
    <location>
        <begin position="454"/>
        <end position="472"/>
    </location>
</feature>
<feature type="topological domain" description="Extracellular" evidence="1">
    <location>
        <begin position="473"/>
        <end position="482"/>
    </location>
</feature>
<feature type="transmembrane region" description="Helical" evidence="1">
    <location>
        <begin position="483"/>
        <end position="504"/>
    </location>
</feature>
<feature type="topological domain" description="Cytoplasmic" evidence="1">
    <location>
        <begin position="505"/>
        <end position="543"/>
    </location>
</feature>
<protein>
    <recommendedName>
        <fullName>Allantoate permease</fullName>
    </recommendedName>
</protein>
<organism>
    <name type="scientific">Saccharomyces cerevisiae (strain ATCC 204508 / S288c)</name>
    <name type="common">Baker's yeast</name>
    <dbReference type="NCBI Taxonomy" id="559292"/>
    <lineage>
        <taxon>Eukaryota</taxon>
        <taxon>Fungi</taxon>
        <taxon>Dikarya</taxon>
        <taxon>Ascomycota</taxon>
        <taxon>Saccharomycotina</taxon>
        <taxon>Saccharomycetes</taxon>
        <taxon>Saccharomycetales</taxon>
        <taxon>Saccharomycetaceae</taxon>
        <taxon>Saccharomyces</taxon>
    </lineage>
</organism>
<proteinExistence type="evidence at protein level"/>